<organism>
    <name type="scientific">Pelodictyon phaeoclathratiforme (strain DSM 5477 / BU-1)</name>
    <dbReference type="NCBI Taxonomy" id="324925"/>
    <lineage>
        <taxon>Bacteria</taxon>
        <taxon>Pseudomonadati</taxon>
        <taxon>Chlorobiota</taxon>
        <taxon>Chlorobiia</taxon>
        <taxon>Chlorobiales</taxon>
        <taxon>Chlorobiaceae</taxon>
        <taxon>Chlorobium/Pelodictyon group</taxon>
        <taxon>Pelodictyon</taxon>
    </lineage>
</organism>
<keyword id="KW-0450">Lipoyl</keyword>
<keyword id="KW-1185">Reference proteome</keyword>
<gene>
    <name evidence="1" type="primary">gcvH</name>
    <name type="ordered locus">Ppha_0697</name>
</gene>
<evidence type="ECO:0000255" key="1">
    <source>
        <dbReference type="HAMAP-Rule" id="MF_00272"/>
    </source>
</evidence>
<evidence type="ECO:0000255" key="2">
    <source>
        <dbReference type="PROSITE-ProRule" id="PRU01066"/>
    </source>
</evidence>
<feature type="chain" id="PRO_1000114534" description="Glycine cleavage system H protein">
    <location>
        <begin position="1"/>
        <end position="127"/>
    </location>
</feature>
<feature type="domain" description="Lipoyl-binding" evidence="2">
    <location>
        <begin position="24"/>
        <end position="105"/>
    </location>
</feature>
<feature type="modified residue" description="N6-lipoyllysine" evidence="1">
    <location>
        <position position="65"/>
    </location>
</feature>
<reference key="1">
    <citation type="submission" date="2008-06" db="EMBL/GenBank/DDBJ databases">
        <title>Complete sequence of Pelodictyon phaeoclathratiforme BU-1.</title>
        <authorList>
            <consortium name="US DOE Joint Genome Institute"/>
            <person name="Lucas S."/>
            <person name="Copeland A."/>
            <person name="Lapidus A."/>
            <person name="Glavina del Rio T."/>
            <person name="Dalin E."/>
            <person name="Tice H."/>
            <person name="Bruce D."/>
            <person name="Goodwin L."/>
            <person name="Pitluck S."/>
            <person name="Schmutz J."/>
            <person name="Larimer F."/>
            <person name="Land M."/>
            <person name="Hauser L."/>
            <person name="Kyrpides N."/>
            <person name="Mikhailova N."/>
            <person name="Liu Z."/>
            <person name="Li T."/>
            <person name="Zhao F."/>
            <person name="Overmann J."/>
            <person name="Bryant D.A."/>
            <person name="Richardson P."/>
        </authorList>
    </citation>
    <scope>NUCLEOTIDE SEQUENCE [LARGE SCALE GENOMIC DNA]</scope>
    <source>
        <strain>DSM 5477 / BU-1</strain>
    </source>
</reference>
<accession>B4SE01</accession>
<name>GCSH_PELPB</name>
<comment type="function">
    <text evidence="1">The glycine cleavage system catalyzes the degradation of glycine. The H protein shuttles the methylamine group of glycine from the P protein to the T protein.</text>
</comment>
<comment type="cofactor">
    <cofactor evidence="1">
        <name>(R)-lipoate</name>
        <dbReference type="ChEBI" id="CHEBI:83088"/>
    </cofactor>
    <text evidence="1">Binds 1 lipoyl cofactor covalently.</text>
</comment>
<comment type="subunit">
    <text evidence="1">The glycine cleavage system is composed of four proteins: P, T, L and H.</text>
</comment>
<comment type="similarity">
    <text evidence="1">Belongs to the GcvH family.</text>
</comment>
<proteinExistence type="inferred from homology"/>
<protein>
    <recommendedName>
        <fullName evidence="1">Glycine cleavage system H protein</fullName>
    </recommendedName>
</protein>
<dbReference type="EMBL" id="CP001110">
    <property type="protein sequence ID" value="ACF42992.1"/>
    <property type="molecule type" value="Genomic_DNA"/>
</dbReference>
<dbReference type="RefSeq" id="WP_012507487.1">
    <property type="nucleotide sequence ID" value="NC_011060.1"/>
</dbReference>
<dbReference type="SMR" id="B4SE01"/>
<dbReference type="STRING" id="324925.Ppha_0697"/>
<dbReference type="KEGG" id="pph:Ppha_0697"/>
<dbReference type="eggNOG" id="COG0509">
    <property type="taxonomic scope" value="Bacteria"/>
</dbReference>
<dbReference type="HOGENOM" id="CLU_097408_2_2_10"/>
<dbReference type="OrthoDB" id="9796712at2"/>
<dbReference type="Proteomes" id="UP000002724">
    <property type="component" value="Chromosome"/>
</dbReference>
<dbReference type="GO" id="GO:0005737">
    <property type="term" value="C:cytoplasm"/>
    <property type="evidence" value="ECO:0007669"/>
    <property type="project" value="TreeGrafter"/>
</dbReference>
<dbReference type="GO" id="GO:0005960">
    <property type="term" value="C:glycine cleavage complex"/>
    <property type="evidence" value="ECO:0007669"/>
    <property type="project" value="InterPro"/>
</dbReference>
<dbReference type="GO" id="GO:0019464">
    <property type="term" value="P:glycine decarboxylation via glycine cleavage system"/>
    <property type="evidence" value="ECO:0007669"/>
    <property type="project" value="UniProtKB-UniRule"/>
</dbReference>
<dbReference type="CDD" id="cd06848">
    <property type="entry name" value="GCS_H"/>
    <property type="match status" value="1"/>
</dbReference>
<dbReference type="Gene3D" id="2.40.50.100">
    <property type="match status" value="1"/>
</dbReference>
<dbReference type="HAMAP" id="MF_00272">
    <property type="entry name" value="GcvH"/>
    <property type="match status" value="1"/>
</dbReference>
<dbReference type="InterPro" id="IPR003016">
    <property type="entry name" value="2-oxoA_DH_lipoyl-BS"/>
</dbReference>
<dbReference type="InterPro" id="IPR000089">
    <property type="entry name" value="Biotin_lipoyl"/>
</dbReference>
<dbReference type="InterPro" id="IPR002930">
    <property type="entry name" value="GCV_H"/>
</dbReference>
<dbReference type="InterPro" id="IPR033753">
    <property type="entry name" value="GCV_H/Fam206"/>
</dbReference>
<dbReference type="InterPro" id="IPR017453">
    <property type="entry name" value="GCV_H_sub"/>
</dbReference>
<dbReference type="InterPro" id="IPR011053">
    <property type="entry name" value="Single_hybrid_motif"/>
</dbReference>
<dbReference type="NCBIfam" id="TIGR00527">
    <property type="entry name" value="gcvH"/>
    <property type="match status" value="1"/>
</dbReference>
<dbReference type="NCBIfam" id="NF002270">
    <property type="entry name" value="PRK01202.1"/>
    <property type="match status" value="1"/>
</dbReference>
<dbReference type="PANTHER" id="PTHR11715">
    <property type="entry name" value="GLYCINE CLEAVAGE SYSTEM H PROTEIN"/>
    <property type="match status" value="1"/>
</dbReference>
<dbReference type="PANTHER" id="PTHR11715:SF3">
    <property type="entry name" value="GLYCINE CLEAVAGE SYSTEM H PROTEIN-RELATED"/>
    <property type="match status" value="1"/>
</dbReference>
<dbReference type="Pfam" id="PF01597">
    <property type="entry name" value="GCV_H"/>
    <property type="match status" value="1"/>
</dbReference>
<dbReference type="SUPFAM" id="SSF51230">
    <property type="entry name" value="Single hybrid motif"/>
    <property type="match status" value="1"/>
</dbReference>
<dbReference type="PROSITE" id="PS50968">
    <property type="entry name" value="BIOTINYL_LIPOYL"/>
    <property type="match status" value="1"/>
</dbReference>
<dbReference type="PROSITE" id="PS00189">
    <property type="entry name" value="LIPOYL"/>
    <property type="match status" value="1"/>
</dbReference>
<sequence length="127" mass="13949">MTIPEDLRYTKDHEWIKLLEDGSTALVGITDFAQHELGDIVFVELKSAGTVLKQHEVFGTVEAVKTVADLFAPVAGELLELNALLDSAEIVNQDPYNDGWLVKMKVASPEAVHALLDAEAYRQLTGE</sequence>